<keyword id="KW-0963">Cytoplasm</keyword>
<keyword id="KW-0648">Protein biosynthesis</keyword>
<feature type="chain" id="PRO_0000341022" description="Ribosome-recycling factor">
    <location>
        <begin position="1"/>
        <end position="187"/>
    </location>
</feature>
<comment type="function">
    <text evidence="1">Responsible for the release of ribosomes from messenger RNA at the termination of protein biosynthesis. May increase the efficiency of translation by recycling ribosomes from one round of translation to another.</text>
</comment>
<comment type="subcellular location">
    <subcellularLocation>
        <location evidence="1">Cytoplasm</location>
    </subcellularLocation>
</comment>
<comment type="similarity">
    <text evidence="1">Belongs to the RRF family.</text>
</comment>
<dbReference type="EMBL" id="CP000943">
    <property type="protein sequence ID" value="ACA15193.1"/>
    <property type="molecule type" value="Genomic_DNA"/>
</dbReference>
<dbReference type="RefSeq" id="WP_012330610.1">
    <property type="nucleotide sequence ID" value="NC_010511.1"/>
</dbReference>
<dbReference type="SMR" id="B0UPZ4"/>
<dbReference type="STRING" id="426117.M446_0632"/>
<dbReference type="KEGG" id="met:M446_0632"/>
<dbReference type="eggNOG" id="COG0233">
    <property type="taxonomic scope" value="Bacteria"/>
</dbReference>
<dbReference type="HOGENOM" id="CLU_073981_2_0_5"/>
<dbReference type="GO" id="GO:0005829">
    <property type="term" value="C:cytosol"/>
    <property type="evidence" value="ECO:0007669"/>
    <property type="project" value="GOC"/>
</dbReference>
<dbReference type="GO" id="GO:0043023">
    <property type="term" value="F:ribosomal large subunit binding"/>
    <property type="evidence" value="ECO:0007669"/>
    <property type="project" value="TreeGrafter"/>
</dbReference>
<dbReference type="GO" id="GO:0002184">
    <property type="term" value="P:cytoplasmic translational termination"/>
    <property type="evidence" value="ECO:0007669"/>
    <property type="project" value="TreeGrafter"/>
</dbReference>
<dbReference type="CDD" id="cd00520">
    <property type="entry name" value="RRF"/>
    <property type="match status" value="1"/>
</dbReference>
<dbReference type="FunFam" id="1.10.132.20:FF:000001">
    <property type="entry name" value="Ribosome-recycling factor"/>
    <property type="match status" value="1"/>
</dbReference>
<dbReference type="FunFam" id="3.30.1360.40:FF:000001">
    <property type="entry name" value="Ribosome-recycling factor"/>
    <property type="match status" value="1"/>
</dbReference>
<dbReference type="Gene3D" id="3.30.1360.40">
    <property type="match status" value="1"/>
</dbReference>
<dbReference type="Gene3D" id="1.10.132.20">
    <property type="entry name" value="Ribosome-recycling factor"/>
    <property type="match status" value="1"/>
</dbReference>
<dbReference type="HAMAP" id="MF_00040">
    <property type="entry name" value="RRF"/>
    <property type="match status" value="1"/>
</dbReference>
<dbReference type="InterPro" id="IPR002661">
    <property type="entry name" value="Ribosome_recyc_fac"/>
</dbReference>
<dbReference type="InterPro" id="IPR023584">
    <property type="entry name" value="Ribosome_recyc_fac_dom"/>
</dbReference>
<dbReference type="InterPro" id="IPR036191">
    <property type="entry name" value="RRF_sf"/>
</dbReference>
<dbReference type="NCBIfam" id="TIGR00496">
    <property type="entry name" value="frr"/>
    <property type="match status" value="1"/>
</dbReference>
<dbReference type="PANTHER" id="PTHR20982:SF3">
    <property type="entry name" value="MITOCHONDRIAL RIBOSOME RECYCLING FACTOR PSEUDO 1"/>
    <property type="match status" value="1"/>
</dbReference>
<dbReference type="PANTHER" id="PTHR20982">
    <property type="entry name" value="RIBOSOME RECYCLING FACTOR"/>
    <property type="match status" value="1"/>
</dbReference>
<dbReference type="Pfam" id="PF01765">
    <property type="entry name" value="RRF"/>
    <property type="match status" value="1"/>
</dbReference>
<dbReference type="SUPFAM" id="SSF55194">
    <property type="entry name" value="Ribosome recycling factor, RRF"/>
    <property type="match status" value="1"/>
</dbReference>
<accession>B0UPZ4</accession>
<name>RRF_METS4</name>
<organism>
    <name type="scientific">Methylobacterium sp. (strain 4-46)</name>
    <dbReference type="NCBI Taxonomy" id="426117"/>
    <lineage>
        <taxon>Bacteria</taxon>
        <taxon>Pseudomonadati</taxon>
        <taxon>Pseudomonadota</taxon>
        <taxon>Alphaproteobacteria</taxon>
        <taxon>Hyphomicrobiales</taxon>
        <taxon>Methylobacteriaceae</taxon>
        <taxon>Methylobacterium</taxon>
    </lineage>
</organism>
<reference key="1">
    <citation type="submission" date="2008-02" db="EMBL/GenBank/DDBJ databases">
        <title>Complete sequence of chromosome of Methylobacterium sp. 4-46.</title>
        <authorList>
            <consortium name="US DOE Joint Genome Institute"/>
            <person name="Copeland A."/>
            <person name="Lucas S."/>
            <person name="Lapidus A."/>
            <person name="Glavina del Rio T."/>
            <person name="Dalin E."/>
            <person name="Tice H."/>
            <person name="Bruce D."/>
            <person name="Goodwin L."/>
            <person name="Pitluck S."/>
            <person name="Chertkov O."/>
            <person name="Brettin T."/>
            <person name="Detter J.C."/>
            <person name="Han C."/>
            <person name="Kuske C.R."/>
            <person name="Schmutz J."/>
            <person name="Larimer F."/>
            <person name="Land M."/>
            <person name="Hauser L."/>
            <person name="Kyrpides N."/>
            <person name="Ivanova N."/>
            <person name="Marx C.J."/>
            <person name="Richardson P."/>
        </authorList>
    </citation>
    <scope>NUCLEOTIDE SEQUENCE [LARGE SCALE GENOMIC DNA]</scope>
    <source>
        <strain>4-46</strain>
    </source>
</reference>
<proteinExistence type="inferred from homology"/>
<sequence length="187" mass="20904">MATPTFDLADIKRRMQGAVNSLKHDLGSLRTGRASPTLLDPIQVEAYGAAMPMAQVATISVPEPRLLSVAVWDRGMVSAVEKAIRESDLGLNPMTEGQTIRLRIPEMNEQRRKEMVKVAHKYAEEARVAVRHVRRDGLDLLKKLEKDGAISQDDEKRQADQVQKVTDQHIAEVDQTLAAKEKEIMQV</sequence>
<gene>
    <name evidence="1" type="primary">frr</name>
    <name type="ordered locus">M446_0632</name>
</gene>
<protein>
    <recommendedName>
        <fullName evidence="1">Ribosome-recycling factor</fullName>
        <shortName evidence="1">RRF</shortName>
    </recommendedName>
    <alternativeName>
        <fullName evidence="1">Ribosome-releasing factor</fullName>
    </alternativeName>
</protein>
<evidence type="ECO:0000255" key="1">
    <source>
        <dbReference type="HAMAP-Rule" id="MF_00040"/>
    </source>
</evidence>